<sequence length="617" mass="68595">MKQSKMPIPTLREMPSDAQVISHALMLRAGYVRQVSAGVYSYLPLANRVIEKAKNIMRQEFEKIGAVEMLAPALLSAELWRESGRYETYGEDLYKLKNREKSDFILGPTHEETFTAIVRDSVKSYKQLPLNLYQIQPKYRDEKRPRNGLLRTREFIMKDAYSFHANYDSLDSVYDEYKAAYERIFTRSGLDFKAIIGDGGAMGGKDSQEFMAITSARTDLDRWVVLDKSVASFDEIPAEVQEEIKAELLKWIVSGEDTIAYSSESSYAANLEMATNEYKPSNRVVAEEEVTRVATPDVKSIDEVAAFLNVPEEQTIKTLFYIADGELVAALLVGNDQLNEVKLKNHLGADFFDVASEEEVANVVQAGFGSLGPVGLPENIKIIADRKVQDVRNAVVGANEDGYHLTGVNPGRDFTAEYVDIREVREGEISPDGQGVLNFARGIEIGHIFKLGTRYSASMGADVLDENGRAVPIIMGCYGIGVSRLLSAVMEQHARLFVNKTPKGEYRYAWGINFPKELAPFDVHLITVNVKDEEAQALTEKLEASLMGAGYEVLTDDRNERVGVKFSDSDLIGLPIRITVGKKAADGIVEVKIKATGDTIEVHADNVLETLEILSKK</sequence>
<proteinExistence type="inferred from homology"/>
<evidence type="ECO:0000255" key="1">
    <source>
        <dbReference type="HAMAP-Rule" id="MF_01569"/>
    </source>
</evidence>
<dbReference type="EC" id="6.1.1.15" evidence="1"/>
<dbReference type="EMBL" id="CP000936">
    <property type="protein sequence ID" value="ACA36387.1"/>
    <property type="molecule type" value="Genomic_DNA"/>
</dbReference>
<dbReference type="RefSeq" id="WP_000814070.1">
    <property type="nucleotide sequence ID" value="NC_010380.1"/>
</dbReference>
<dbReference type="SMR" id="B1I8Z1"/>
<dbReference type="KEGG" id="spv:SPH_0381"/>
<dbReference type="HOGENOM" id="CLU_016739_0_0_9"/>
<dbReference type="Proteomes" id="UP000002163">
    <property type="component" value="Chromosome"/>
</dbReference>
<dbReference type="GO" id="GO:0005829">
    <property type="term" value="C:cytosol"/>
    <property type="evidence" value="ECO:0007669"/>
    <property type="project" value="TreeGrafter"/>
</dbReference>
<dbReference type="GO" id="GO:0002161">
    <property type="term" value="F:aminoacyl-tRNA deacylase activity"/>
    <property type="evidence" value="ECO:0007669"/>
    <property type="project" value="InterPro"/>
</dbReference>
<dbReference type="GO" id="GO:0005524">
    <property type="term" value="F:ATP binding"/>
    <property type="evidence" value="ECO:0007669"/>
    <property type="project" value="UniProtKB-UniRule"/>
</dbReference>
<dbReference type="GO" id="GO:0140096">
    <property type="term" value="F:catalytic activity, acting on a protein"/>
    <property type="evidence" value="ECO:0007669"/>
    <property type="project" value="UniProtKB-ARBA"/>
</dbReference>
<dbReference type="GO" id="GO:0004827">
    <property type="term" value="F:proline-tRNA ligase activity"/>
    <property type="evidence" value="ECO:0007669"/>
    <property type="project" value="UniProtKB-UniRule"/>
</dbReference>
<dbReference type="GO" id="GO:0016740">
    <property type="term" value="F:transferase activity"/>
    <property type="evidence" value="ECO:0007669"/>
    <property type="project" value="UniProtKB-ARBA"/>
</dbReference>
<dbReference type="GO" id="GO:0006433">
    <property type="term" value="P:prolyl-tRNA aminoacylation"/>
    <property type="evidence" value="ECO:0007669"/>
    <property type="project" value="UniProtKB-UniRule"/>
</dbReference>
<dbReference type="CDD" id="cd04334">
    <property type="entry name" value="ProRS-INS"/>
    <property type="match status" value="1"/>
</dbReference>
<dbReference type="CDD" id="cd00861">
    <property type="entry name" value="ProRS_anticodon_short"/>
    <property type="match status" value="1"/>
</dbReference>
<dbReference type="CDD" id="cd00779">
    <property type="entry name" value="ProRS_core_prok"/>
    <property type="match status" value="1"/>
</dbReference>
<dbReference type="FunFam" id="3.30.930.10:FF:000062">
    <property type="entry name" value="Proline--tRNA ligase"/>
    <property type="match status" value="1"/>
</dbReference>
<dbReference type="FunFam" id="3.30.930.10:FF:000070">
    <property type="entry name" value="Proline--tRNA ligase"/>
    <property type="match status" value="1"/>
</dbReference>
<dbReference type="FunFam" id="3.40.50.800:FF:000011">
    <property type="entry name" value="Proline--tRNA ligase"/>
    <property type="match status" value="1"/>
</dbReference>
<dbReference type="FunFam" id="3.90.960.10:FF:000004">
    <property type="entry name" value="Proline--tRNA ligase"/>
    <property type="match status" value="1"/>
</dbReference>
<dbReference type="Gene3D" id="3.40.50.800">
    <property type="entry name" value="Anticodon-binding domain"/>
    <property type="match status" value="1"/>
</dbReference>
<dbReference type="Gene3D" id="3.30.930.10">
    <property type="entry name" value="Bira Bifunctional Protein, Domain 2"/>
    <property type="match status" value="2"/>
</dbReference>
<dbReference type="Gene3D" id="3.90.960.10">
    <property type="entry name" value="YbaK/aminoacyl-tRNA synthetase-associated domain"/>
    <property type="match status" value="1"/>
</dbReference>
<dbReference type="HAMAP" id="MF_01569">
    <property type="entry name" value="Pro_tRNA_synth_type1"/>
    <property type="match status" value="1"/>
</dbReference>
<dbReference type="InterPro" id="IPR002314">
    <property type="entry name" value="aa-tRNA-synt_IIb"/>
</dbReference>
<dbReference type="InterPro" id="IPR006195">
    <property type="entry name" value="aa-tRNA-synth_II"/>
</dbReference>
<dbReference type="InterPro" id="IPR045864">
    <property type="entry name" value="aa-tRNA-synth_II/BPL/LPL"/>
</dbReference>
<dbReference type="InterPro" id="IPR004154">
    <property type="entry name" value="Anticodon-bd"/>
</dbReference>
<dbReference type="InterPro" id="IPR036621">
    <property type="entry name" value="Anticodon-bd_dom_sf"/>
</dbReference>
<dbReference type="InterPro" id="IPR002316">
    <property type="entry name" value="Pro-tRNA-ligase_IIa"/>
</dbReference>
<dbReference type="InterPro" id="IPR004500">
    <property type="entry name" value="Pro-tRNA-synth_IIa_bac-type"/>
</dbReference>
<dbReference type="InterPro" id="IPR023717">
    <property type="entry name" value="Pro-tRNA-Synthase_IIa_type1"/>
</dbReference>
<dbReference type="InterPro" id="IPR050062">
    <property type="entry name" value="Pro-tRNA_synthetase"/>
</dbReference>
<dbReference type="InterPro" id="IPR044140">
    <property type="entry name" value="ProRS_anticodon_short"/>
</dbReference>
<dbReference type="InterPro" id="IPR033730">
    <property type="entry name" value="ProRS_core_prok"/>
</dbReference>
<dbReference type="InterPro" id="IPR036754">
    <property type="entry name" value="YbaK/aa-tRNA-synt-asso_dom_sf"/>
</dbReference>
<dbReference type="InterPro" id="IPR007214">
    <property type="entry name" value="YbaK/aa-tRNA-synth-assoc-dom"/>
</dbReference>
<dbReference type="NCBIfam" id="NF006625">
    <property type="entry name" value="PRK09194.1"/>
    <property type="match status" value="1"/>
</dbReference>
<dbReference type="NCBIfam" id="TIGR00409">
    <property type="entry name" value="proS_fam_II"/>
    <property type="match status" value="2"/>
</dbReference>
<dbReference type="PANTHER" id="PTHR42753">
    <property type="entry name" value="MITOCHONDRIAL RIBOSOME PROTEIN L39/PROLYL-TRNA LIGASE FAMILY MEMBER"/>
    <property type="match status" value="1"/>
</dbReference>
<dbReference type="PANTHER" id="PTHR42753:SF2">
    <property type="entry name" value="PROLINE--TRNA LIGASE"/>
    <property type="match status" value="1"/>
</dbReference>
<dbReference type="Pfam" id="PF03129">
    <property type="entry name" value="HGTP_anticodon"/>
    <property type="match status" value="1"/>
</dbReference>
<dbReference type="Pfam" id="PF00587">
    <property type="entry name" value="tRNA-synt_2b"/>
    <property type="match status" value="1"/>
</dbReference>
<dbReference type="Pfam" id="PF04073">
    <property type="entry name" value="tRNA_edit"/>
    <property type="match status" value="1"/>
</dbReference>
<dbReference type="PRINTS" id="PR01046">
    <property type="entry name" value="TRNASYNTHPRO"/>
</dbReference>
<dbReference type="SUPFAM" id="SSF52954">
    <property type="entry name" value="Class II aaRS ABD-related"/>
    <property type="match status" value="1"/>
</dbReference>
<dbReference type="SUPFAM" id="SSF55681">
    <property type="entry name" value="Class II aaRS and biotin synthetases"/>
    <property type="match status" value="1"/>
</dbReference>
<dbReference type="SUPFAM" id="SSF55826">
    <property type="entry name" value="YbaK/ProRS associated domain"/>
    <property type="match status" value="1"/>
</dbReference>
<dbReference type="PROSITE" id="PS50862">
    <property type="entry name" value="AA_TRNA_LIGASE_II"/>
    <property type="match status" value="1"/>
</dbReference>
<reference key="1">
    <citation type="journal article" date="2010" name="Genome Biol.">
        <title>Structure and dynamics of the pan-genome of Streptococcus pneumoniae and closely related species.</title>
        <authorList>
            <person name="Donati C."/>
            <person name="Hiller N.L."/>
            <person name="Tettelin H."/>
            <person name="Muzzi A."/>
            <person name="Croucher N.J."/>
            <person name="Angiuoli S.V."/>
            <person name="Oggioni M."/>
            <person name="Dunning Hotopp J.C."/>
            <person name="Hu F.Z."/>
            <person name="Riley D.R."/>
            <person name="Covacci A."/>
            <person name="Mitchell T.J."/>
            <person name="Bentley S.D."/>
            <person name="Kilian M."/>
            <person name="Ehrlich G.D."/>
            <person name="Rappuoli R."/>
            <person name="Moxon E.R."/>
            <person name="Masignani V."/>
        </authorList>
    </citation>
    <scope>NUCLEOTIDE SEQUENCE [LARGE SCALE GENOMIC DNA]</scope>
    <source>
        <strain>Hungary19A-6</strain>
    </source>
</reference>
<comment type="function">
    <text evidence="1">Catalyzes the attachment of proline to tRNA(Pro) in a two-step reaction: proline is first activated by ATP to form Pro-AMP and then transferred to the acceptor end of tRNA(Pro). As ProRS can inadvertently accommodate and process non-cognate amino acids such as alanine and cysteine, to avoid such errors it has two additional distinct editing activities against alanine. One activity is designated as 'pretransfer' editing and involves the tRNA(Pro)-independent hydrolysis of activated Ala-AMP. The other activity is designated 'posttransfer' editing and involves deacylation of mischarged Ala-tRNA(Pro). The misacylated Cys-tRNA(Pro) is not edited by ProRS.</text>
</comment>
<comment type="catalytic activity">
    <reaction evidence="1">
        <text>tRNA(Pro) + L-proline + ATP = L-prolyl-tRNA(Pro) + AMP + diphosphate</text>
        <dbReference type="Rhea" id="RHEA:14305"/>
        <dbReference type="Rhea" id="RHEA-COMP:9700"/>
        <dbReference type="Rhea" id="RHEA-COMP:9702"/>
        <dbReference type="ChEBI" id="CHEBI:30616"/>
        <dbReference type="ChEBI" id="CHEBI:33019"/>
        <dbReference type="ChEBI" id="CHEBI:60039"/>
        <dbReference type="ChEBI" id="CHEBI:78442"/>
        <dbReference type="ChEBI" id="CHEBI:78532"/>
        <dbReference type="ChEBI" id="CHEBI:456215"/>
        <dbReference type="EC" id="6.1.1.15"/>
    </reaction>
</comment>
<comment type="subunit">
    <text evidence="1">Homodimer.</text>
</comment>
<comment type="subcellular location">
    <subcellularLocation>
        <location evidence="1">Cytoplasm</location>
    </subcellularLocation>
</comment>
<comment type="domain">
    <text evidence="1">Consists of three domains: the N-terminal catalytic domain, the editing domain and the C-terminal anticodon-binding domain.</text>
</comment>
<comment type="similarity">
    <text evidence="1">Belongs to the class-II aminoacyl-tRNA synthetase family. ProS type 1 subfamily.</text>
</comment>
<organism>
    <name type="scientific">Streptococcus pneumoniae (strain Hungary19A-6)</name>
    <dbReference type="NCBI Taxonomy" id="487214"/>
    <lineage>
        <taxon>Bacteria</taxon>
        <taxon>Bacillati</taxon>
        <taxon>Bacillota</taxon>
        <taxon>Bacilli</taxon>
        <taxon>Lactobacillales</taxon>
        <taxon>Streptococcaceae</taxon>
        <taxon>Streptococcus</taxon>
    </lineage>
</organism>
<name>SYP_STRPI</name>
<protein>
    <recommendedName>
        <fullName evidence="1">Proline--tRNA ligase</fullName>
        <ecNumber evidence="1">6.1.1.15</ecNumber>
    </recommendedName>
    <alternativeName>
        <fullName evidence="1">Prolyl-tRNA synthetase</fullName>
        <shortName evidence="1">ProRS</shortName>
    </alternativeName>
</protein>
<feature type="chain" id="PRO_1000199427" description="Proline--tRNA ligase">
    <location>
        <begin position="1"/>
        <end position="617"/>
    </location>
</feature>
<keyword id="KW-0030">Aminoacyl-tRNA synthetase</keyword>
<keyword id="KW-0067">ATP-binding</keyword>
<keyword id="KW-0963">Cytoplasm</keyword>
<keyword id="KW-0436">Ligase</keyword>
<keyword id="KW-0547">Nucleotide-binding</keyword>
<keyword id="KW-0648">Protein biosynthesis</keyword>
<gene>
    <name evidence="1" type="primary">proS</name>
    <name type="ordered locus">SPH_0381</name>
</gene>
<accession>B1I8Z1</accession>